<name>SRARP_HUMAN</name>
<dbReference type="EMBL" id="AK127425">
    <property type="protein sequence ID" value="BAG54501.1"/>
    <property type="molecule type" value="mRNA"/>
</dbReference>
<dbReference type="EMBL" id="AL355994">
    <property type="status" value="NOT_ANNOTATED_CDS"/>
    <property type="molecule type" value="Genomic_DNA"/>
</dbReference>
<dbReference type="EMBL" id="CH471167">
    <property type="protein sequence ID" value="EAW51759.1"/>
    <property type="molecule type" value="Genomic_DNA"/>
</dbReference>
<dbReference type="EMBL" id="BC017946">
    <property type="protein sequence ID" value="AAH17946.1"/>
    <property type="molecule type" value="mRNA"/>
</dbReference>
<dbReference type="CCDS" id="CCDS166.1"/>
<dbReference type="RefSeq" id="NP_849162.1">
    <property type="nucleotide sequence ID" value="NM_178840.4"/>
</dbReference>
<dbReference type="BioGRID" id="127222">
    <property type="interactions" value="8"/>
</dbReference>
<dbReference type="FunCoup" id="Q8NEQ6">
    <property type="interactions" value="289"/>
</dbReference>
<dbReference type="IntAct" id="Q8NEQ6">
    <property type="interactions" value="7"/>
</dbReference>
<dbReference type="STRING" id="9606.ENSP00000332162"/>
<dbReference type="iPTMnet" id="Q8NEQ6"/>
<dbReference type="PhosphoSitePlus" id="Q8NEQ6"/>
<dbReference type="BioMuta" id="SRARP"/>
<dbReference type="DMDM" id="74751258"/>
<dbReference type="MassIVE" id="Q8NEQ6"/>
<dbReference type="PaxDb" id="9606-ENSP00000332162"/>
<dbReference type="PeptideAtlas" id="Q8NEQ6"/>
<dbReference type="ProteomicsDB" id="73201"/>
<dbReference type="Antibodypedia" id="14459">
    <property type="antibodies" value="78 antibodies from 19 providers"/>
</dbReference>
<dbReference type="DNASU" id="149563"/>
<dbReference type="Ensembl" id="ENST00000329454.2">
    <property type="protein sequence ID" value="ENSP00000332162.2"/>
    <property type="gene ID" value="ENSG00000183888.4"/>
</dbReference>
<dbReference type="GeneID" id="149563"/>
<dbReference type="KEGG" id="hsa:149563"/>
<dbReference type="MANE-Select" id="ENST00000329454.2">
    <property type="protein sequence ID" value="ENSP00000332162.2"/>
    <property type="RefSeq nucleotide sequence ID" value="NM_178840.4"/>
    <property type="RefSeq protein sequence ID" value="NP_849162.1"/>
</dbReference>
<dbReference type="UCSC" id="uc001axn.4">
    <property type="organism name" value="human"/>
</dbReference>
<dbReference type="AGR" id="HGNC:28339"/>
<dbReference type="CTD" id="149563"/>
<dbReference type="DisGeNET" id="149563"/>
<dbReference type="GeneCards" id="SRARP"/>
<dbReference type="HGNC" id="HGNC:28339">
    <property type="gene designation" value="SRARP"/>
</dbReference>
<dbReference type="HPA" id="ENSG00000183888">
    <property type="expression patterns" value="Tissue enhanced (brain, breast)"/>
</dbReference>
<dbReference type="MIM" id="619448">
    <property type="type" value="gene"/>
</dbReference>
<dbReference type="neXtProt" id="NX_Q8NEQ6"/>
<dbReference type="OpenTargets" id="ENSG00000183888"/>
<dbReference type="PharmGKB" id="PA142672514"/>
<dbReference type="VEuPathDB" id="HostDB:ENSG00000183888"/>
<dbReference type="eggNOG" id="ENOG502TD74">
    <property type="taxonomic scope" value="Eukaryota"/>
</dbReference>
<dbReference type="GeneTree" id="ENSGT00390000000265"/>
<dbReference type="HOGENOM" id="CLU_110067_0_0_1"/>
<dbReference type="InParanoid" id="Q8NEQ6"/>
<dbReference type="OMA" id="AHLTFII"/>
<dbReference type="OrthoDB" id="9451422at2759"/>
<dbReference type="PAN-GO" id="Q8NEQ6">
    <property type="GO annotations" value="4 GO annotations based on evolutionary models"/>
</dbReference>
<dbReference type="PhylomeDB" id="Q8NEQ6"/>
<dbReference type="TreeFam" id="TF338217"/>
<dbReference type="PathwayCommons" id="Q8NEQ6"/>
<dbReference type="SignaLink" id="Q8NEQ6"/>
<dbReference type="BioGRID-ORCS" id="149563">
    <property type="hits" value="18 hits in 1119 CRISPR screens"/>
</dbReference>
<dbReference type="GenomeRNAi" id="149563"/>
<dbReference type="Pharos" id="Q8NEQ6">
    <property type="development level" value="Tbio"/>
</dbReference>
<dbReference type="PRO" id="PR:Q8NEQ6"/>
<dbReference type="Proteomes" id="UP000005640">
    <property type="component" value="Chromosome 1"/>
</dbReference>
<dbReference type="RNAct" id="Q8NEQ6">
    <property type="molecule type" value="protein"/>
</dbReference>
<dbReference type="Bgee" id="ENSG00000183888">
    <property type="expression patterns" value="Expressed in medial globus pallidus and 91 other cell types or tissues"/>
</dbReference>
<dbReference type="GO" id="GO:0005737">
    <property type="term" value="C:cytoplasm"/>
    <property type="evidence" value="ECO:0000314"/>
    <property type="project" value="UniProtKB"/>
</dbReference>
<dbReference type="GO" id="GO:0005634">
    <property type="term" value="C:nucleus"/>
    <property type="evidence" value="ECO:0000314"/>
    <property type="project" value="UniProtKB"/>
</dbReference>
<dbReference type="GO" id="GO:0030331">
    <property type="term" value="F:nuclear estrogen receptor binding"/>
    <property type="evidence" value="ECO:0000353"/>
    <property type="project" value="UniProtKB"/>
</dbReference>
<dbReference type="GO" id="GO:0033148">
    <property type="term" value="P:positive regulation of intracellular estrogen receptor signaling pathway"/>
    <property type="evidence" value="ECO:0000315"/>
    <property type="project" value="UniProtKB"/>
</dbReference>
<dbReference type="InterPro" id="IPR027852">
    <property type="entry name" value="C1ORF64"/>
</dbReference>
<dbReference type="PANTHER" id="PTHR38494">
    <property type="entry name" value="STEROID RECEPTOR-ASSOCIATED AND REGULATED PROTEIN"/>
    <property type="match status" value="1"/>
</dbReference>
<dbReference type="PANTHER" id="PTHR38494:SF1">
    <property type="entry name" value="STEROID RECEPTOR-ASSOCIATED AND REGULATED PROTEIN"/>
    <property type="match status" value="1"/>
</dbReference>
<dbReference type="Pfam" id="PF15547">
    <property type="entry name" value="C1ORF64"/>
    <property type="match status" value="1"/>
</dbReference>
<evidence type="ECO:0000269" key="1">
    <source>
    </source>
</evidence>
<evidence type="ECO:0000269" key="2">
    <source>
    </source>
</evidence>
<evidence type="ECO:0000269" key="3">
    <source>
    </source>
</evidence>
<evidence type="ECO:0000303" key="4">
    <source>
    </source>
</evidence>
<evidence type="ECO:0000303" key="5">
    <source>
    </source>
</evidence>
<evidence type="ECO:0000312" key="6">
    <source>
        <dbReference type="HGNC" id="HGNC:28339"/>
    </source>
</evidence>
<proteinExistence type="evidence at protein level"/>
<protein>
    <recommendedName>
        <fullName evidence="6">Steroid receptor-associated and regulated protein</fullName>
    </recommendedName>
    <alternativeName>
        <fullName evidence="4">Estrogen receptor-related factor</fullName>
        <shortName evidence="4">ER-related factor</shortName>
    </alternativeName>
    <alternativeName>
        <fullName evidence="5">Steroid receptor-regulated protein</fullName>
    </alternativeName>
</protein>
<sequence>MAPSEDPRDWRANLKGTIRETGLETSSGGKLAGHQKTVPTAHLTFVIDCTHGKQLSLAATASPPQAPSPNRGLVTPPMKTYIVFCGENWPHLTRVTPMGGGCLAQARATLPLCRGSVASASFPVSPLCPQEVPEAKGKPVKAAPVRSSTWGTVKDSLKALSSCVCGQAD</sequence>
<organism>
    <name type="scientific">Homo sapiens</name>
    <name type="common">Human</name>
    <dbReference type="NCBI Taxonomy" id="9606"/>
    <lineage>
        <taxon>Eukaryota</taxon>
        <taxon>Metazoa</taxon>
        <taxon>Chordata</taxon>
        <taxon>Craniata</taxon>
        <taxon>Vertebrata</taxon>
        <taxon>Euteleostomi</taxon>
        <taxon>Mammalia</taxon>
        <taxon>Eutheria</taxon>
        <taxon>Euarchontoglires</taxon>
        <taxon>Primates</taxon>
        <taxon>Haplorrhini</taxon>
        <taxon>Catarrhini</taxon>
        <taxon>Hominidae</taxon>
        <taxon>Homo</taxon>
    </lineage>
</organism>
<keyword id="KW-1267">Proteomics identification</keyword>
<keyword id="KW-1185">Reference proteome</keyword>
<comment type="function">
    <text evidence="2 3">May regulate the transcriptional function of androgen and estrogen receptors.</text>
</comment>
<comment type="subunit">
    <text evidence="3">Interacts with 14-3-3 proteins (PubMed:28915724).</text>
</comment>
<comment type="interaction">
    <interactant intactId="EBI-17858294">
        <id>Q8NEQ6</id>
    </interactant>
    <interactant intactId="EBI-11524452">
        <id>Q8N9N5-2</id>
        <label>BANP</label>
    </interactant>
    <organismsDiffer>false</organismsDiffer>
    <experiments>3</experiments>
</comment>
<comment type="interaction">
    <interactant intactId="EBI-17858294">
        <id>Q8NEQ6</id>
    </interactant>
    <interactant intactId="EBI-10242151">
        <id>Q53EP0-3</id>
        <label>FNDC3B</label>
    </interactant>
    <organismsDiffer>false</organismsDiffer>
    <experiments>3</experiments>
</comment>
<comment type="interaction">
    <interactant intactId="EBI-17858294">
        <id>Q8NEQ6</id>
    </interactant>
    <interactant intactId="EBI-11742836">
        <id>Q16656-4</id>
        <label>NRF1</label>
    </interactant>
    <organismsDiffer>false</organismsDiffer>
    <experiments>3</experiments>
</comment>
<comment type="interaction">
    <interactant intactId="EBI-17858294">
        <id>Q8NEQ6</id>
    </interactant>
    <interactant intactId="EBI-2798044">
        <id>Q2TAL8</id>
        <label>QRICH1</label>
    </interactant>
    <organismsDiffer>false</organismsDiffer>
    <experiments>3</experiments>
</comment>
<comment type="interaction">
    <interactant intactId="EBI-17858294">
        <id>Q8NEQ6</id>
    </interactant>
    <interactant intactId="EBI-1390787">
        <id>P04920</id>
        <label>SLC4A2</label>
    </interactant>
    <organismsDiffer>false</organismsDiffer>
    <experiments>2</experiments>
</comment>
<comment type="interaction">
    <interactant intactId="EBI-17858294">
        <id>Q8NEQ6</id>
    </interactant>
    <interactant intactId="EBI-720609">
        <id>O76024</id>
        <label>WFS1</label>
    </interactant>
    <organismsDiffer>false</organismsDiffer>
    <experiments>3</experiments>
</comment>
<comment type="tissue specificity">
    <text evidence="2 3">Expressed in breast tumors with a higher expression level in estrogen receptor-positive cancers (PubMed:22341523, PubMed:28915724).</text>
</comment>
<comment type="induction">
    <text evidence="2">Up-regulated in breast cancers (PubMed:22341523).</text>
</comment>
<reference key="1">
    <citation type="journal article" date="2004" name="Nat. Genet.">
        <title>Complete sequencing and characterization of 21,243 full-length human cDNAs.</title>
        <authorList>
            <person name="Ota T."/>
            <person name="Suzuki Y."/>
            <person name="Nishikawa T."/>
            <person name="Otsuki T."/>
            <person name="Sugiyama T."/>
            <person name="Irie R."/>
            <person name="Wakamatsu A."/>
            <person name="Hayashi K."/>
            <person name="Sato H."/>
            <person name="Nagai K."/>
            <person name="Kimura K."/>
            <person name="Makita H."/>
            <person name="Sekine M."/>
            <person name="Obayashi M."/>
            <person name="Nishi T."/>
            <person name="Shibahara T."/>
            <person name="Tanaka T."/>
            <person name="Ishii S."/>
            <person name="Yamamoto J."/>
            <person name="Saito K."/>
            <person name="Kawai Y."/>
            <person name="Isono Y."/>
            <person name="Nakamura Y."/>
            <person name="Nagahari K."/>
            <person name="Murakami K."/>
            <person name="Yasuda T."/>
            <person name="Iwayanagi T."/>
            <person name="Wagatsuma M."/>
            <person name="Shiratori A."/>
            <person name="Sudo H."/>
            <person name="Hosoiri T."/>
            <person name="Kaku Y."/>
            <person name="Kodaira H."/>
            <person name="Kondo H."/>
            <person name="Sugawara M."/>
            <person name="Takahashi M."/>
            <person name="Kanda K."/>
            <person name="Yokoi T."/>
            <person name="Furuya T."/>
            <person name="Kikkawa E."/>
            <person name="Omura Y."/>
            <person name="Abe K."/>
            <person name="Kamihara K."/>
            <person name="Katsuta N."/>
            <person name="Sato K."/>
            <person name="Tanikawa M."/>
            <person name="Yamazaki M."/>
            <person name="Ninomiya K."/>
            <person name="Ishibashi T."/>
            <person name="Yamashita H."/>
            <person name="Murakawa K."/>
            <person name="Fujimori K."/>
            <person name="Tanai H."/>
            <person name="Kimata M."/>
            <person name="Watanabe M."/>
            <person name="Hiraoka S."/>
            <person name="Chiba Y."/>
            <person name="Ishida S."/>
            <person name="Ono Y."/>
            <person name="Takiguchi S."/>
            <person name="Watanabe S."/>
            <person name="Yosida M."/>
            <person name="Hotuta T."/>
            <person name="Kusano J."/>
            <person name="Kanehori K."/>
            <person name="Takahashi-Fujii A."/>
            <person name="Hara H."/>
            <person name="Tanase T.-O."/>
            <person name="Nomura Y."/>
            <person name="Togiya S."/>
            <person name="Komai F."/>
            <person name="Hara R."/>
            <person name="Takeuchi K."/>
            <person name="Arita M."/>
            <person name="Imose N."/>
            <person name="Musashino K."/>
            <person name="Yuuki H."/>
            <person name="Oshima A."/>
            <person name="Sasaki N."/>
            <person name="Aotsuka S."/>
            <person name="Yoshikawa Y."/>
            <person name="Matsunawa H."/>
            <person name="Ichihara T."/>
            <person name="Shiohata N."/>
            <person name="Sano S."/>
            <person name="Moriya S."/>
            <person name="Momiyama H."/>
            <person name="Satoh N."/>
            <person name="Takami S."/>
            <person name="Terashima Y."/>
            <person name="Suzuki O."/>
            <person name="Nakagawa S."/>
            <person name="Senoh A."/>
            <person name="Mizoguchi H."/>
            <person name="Goto Y."/>
            <person name="Shimizu F."/>
            <person name="Wakebe H."/>
            <person name="Hishigaki H."/>
            <person name="Watanabe T."/>
            <person name="Sugiyama A."/>
            <person name="Takemoto M."/>
            <person name="Kawakami B."/>
            <person name="Yamazaki M."/>
            <person name="Watanabe K."/>
            <person name="Kumagai A."/>
            <person name="Itakura S."/>
            <person name="Fukuzumi Y."/>
            <person name="Fujimori Y."/>
            <person name="Komiyama M."/>
            <person name="Tashiro H."/>
            <person name="Tanigami A."/>
            <person name="Fujiwara T."/>
            <person name="Ono T."/>
            <person name="Yamada K."/>
            <person name="Fujii Y."/>
            <person name="Ozaki K."/>
            <person name="Hirao M."/>
            <person name="Ohmori Y."/>
            <person name="Kawabata A."/>
            <person name="Hikiji T."/>
            <person name="Kobatake N."/>
            <person name="Inagaki H."/>
            <person name="Ikema Y."/>
            <person name="Okamoto S."/>
            <person name="Okitani R."/>
            <person name="Kawakami T."/>
            <person name="Noguchi S."/>
            <person name="Itoh T."/>
            <person name="Shigeta K."/>
            <person name="Senba T."/>
            <person name="Matsumura K."/>
            <person name="Nakajima Y."/>
            <person name="Mizuno T."/>
            <person name="Morinaga M."/>
            <person name="Sasaki M."/>
            <person name="Togashi T."/>
            <person name="Oyama M."/>
            <person name="Hata H."/>
            <person name="Watanabe M."/>
            <person name="Komatsu T."/>
            <person name="Mizushima-Sugano J."/>
            <person name="Satoh T."/>
            <person name="Shirai Y."/>
            <person name="Takahashi Y."/>
            <person name="Nakagawa K."/>
            <person name="Okumura K."/>
            <person name="Nagase T."/>
            <person name="Nomura N."/>
            <person name="Kikuchi H."/>
            <person name="Masuho Y."/>
            <person name="Yamashita R."/>
            <person name="Nakai K."/>
            <person name="Yada T."/>
            <person name="Nakamura Y."/>
            <person name="Ohara O."/>
            <person name="Isogai T."/>
            <person name="Sugano S."/>
        </authorList>
    </citation>
    <scope>NUCLEOTIDE SEQUENCE [LARGE SCALE MRNA]</scope>
    <source>
        <tissue>Thalamus</tissue>
    </source>
</reference>
<reference key="2">
    <citation type="journal article" date="2006" name="Nature">
        <title>The DNA sequence and biological annotation of human chromosome 1.</title>
        <authorList>
            <person name="Gregory S.G."/>
            <person name="Barlow K.F."/>
            <person name="McLay K.E."/>
            <person name="Kaul R."/>
            <person name="Swarbreck D."/>
            <person name="Dunham A."/>
            <person name="Scott C.E."/>
            <person name="Howe K.L."/>
            <person name="Woodfine K."/>
            <person name="Spencer C.C.A."/>
            <person name="Jones M.C."/>
            <person name="Gillson C."/>
            <person name="Searle S."/>
            <person name="Zhou Y."/>
            <person name="Kokocinski F."/>
            <person name="McDonald L."/>
            <person name="Evans R."/>
            <person name="Phillips K."/>
            <person name="Atkinson A."/>
            <person name="Cooper R."/>
            <person name="Jones C."/>
            <person name="Hall R.E."/>
            <person name="Andrews T.D."/>
            <person name="Lloyd C."/>
            <person name="Ainscough R."/>
            <person name="Almeida J.P."/>
            <person name="Ambrose K.D."/>
            <person name="Anderson F."/>
            <person name="Andrew R.W."/>
            <person name="Ashwell R.I.S."/>
            <person name="Aubin K."/>
            <person name="Babbage A.K."/>
            <person name="Bagguley C.L."/>
            <person name="Bailey J."/>
            <person name="Beasley H."/>
            <person name="Bethel G."/>
            <person name="Bird C.P."/>
            <person name="Bray-Allen S."/>
            <person name="Brown J.Y."/>
            <person name="Brown A.J."/>
            <person name="Buckley D."/>
            <person name="Burton J."/>
            <person name="Bye J."/>
            <person name="Carder C."/>
            <person name="Chapman J.C."/>
            <person name="Clark S.Y."/>
            <person name="Clarke G."/>
            <person name="Clee C."/>
            <person name="Cobley V."/>
            <person name="Collier R.E."/>
            <person name="Corby N."/>
            <person name="Coville G.J."/>
            <person name="Davies J."/>
            <person name="Deadman R."/>
            <person name="Dunn M."/>
            <person name="Earthrowl M."/>
            <person name="Ellington A.G."/>
            <person name="Errington H."/>
            <person name="Frankish A."/>
            <person name="Frankland J."/>
            <person name="French L."/>
            <person name="Garner P."/>
            <person name="Garnett J."/>
            <person name="Gay L."/>
            <person name="Ghori M.R.J."/>
            <person name="Gibson R."/>
            <person name="Gilby L.M."/>
            <person name="Gillett W."/>
            <person name="Glithero R.J."/>
            <person name="Grafham D.V."/>
            <person name="Griffiths C."/>
            <person name="Griffiths-Jones S."/>
            <person name="Grocock R."/>
            <person name="Hammond S."/>
            <person name="Harrison E.S.I."/>
            <person name="Hart E."/>
            <person name="Haugen E."/>
            <person name="Heath P.D."/>
            <person name="Holmes S."/>
            <person name="Holt K."/>
            <person name="Howden P.J."/>
            <person name="Hunt A.R."/>
            <person name="Hunt S.E."/>
            <person name="Hunter G."/>
            <person name="Isherwood J."/>
            <person name="James R."/>
            <person name="Johnson C."/>
            <person name="Johnson D."/>
            <person name="Joy A."/>
            <person name="Kay M."/>
            <person name="Kershaw J.K."/>
            <person name="Kibukawa M."/>
            <person name="Kimberley A.M."/>
            <person name="King A."/>
            <person name="Knights A.J."/>
            <person name="Lad H."/>
            <person name="Laird G."/>
            <person name="Lawlor S."/>
            <person name="Leongamornlert D.A."/>
            <person name="Lloyd D.M."/>
            <person name="Loveland J."/>
            <person name="Lovell J."/>
            <person name="Lush M.J."/>
            <person name="Lyne R."/>
            <person name="Martin S."/>
            <person name="Mashreghi-Mohammadi M."/>
            <person name="Matthews L."/>
            <person name="Matthews N.S.W."/>
            <person name="McLaren S."/>
            <person name="Milne S."/>
            <person name="Mistry S."/>
            <person name="Moore M.J.F."/>
            <person name="Nickerson T."/>
            <person name="O'Dell C.N."/>
            <person name="Oliver K."/>
            <person name="Palmeiri A."/>
            <person name="Palmer S.A."/>
            <person name="Parker A."/>
            <person name="Patel D."/>
            <person name="Pearce A.V."/>
            <person name="Peck A.I."/>
            <person name="Pelan S."/>
            <person name="Phelps K."/>
            <person name="Phillimore B.J."/>
            <person name="Plumb R."/>
            <person name="Rajan J."/>
            <person name="Raymond C."/>
            <person name="Rouse G."/>
            <person name="Saenphimmachak C."/>
            <person name="Sehra H.K."/>
            <person name="Sheridan E."/>
            <person name="Shownkeen R."/>
            <person name="Sims S."/>
            <person name="Skuce C.D."/>
            <person name="Smith M."/>
            <person name="Steward C."/>
            <person name="Subramanian S."/>
            <person name="Sycamore N."/>
            <person name="Tracey A."/>
            <person name="Tromans A."/>
            <person name="Van Helmond Z."/>
            <person name="Wall M."/>
            <person name="Wallis J.M."/>
            <person name="White S."/>
            <person name="Whitehead S.L."/>
            <person name="Wilkinson J.E."/>
            <person name="Willey D.L."/>
            <person name="Williams H."/>
            <person name="Wilming L."/>
            <person name="Wray P.W."/>
            <person name="Wu Z."/>
            <person name="Coulson A."/>
            <person name="Vaudin M."/>
            <person name="Sulston J.E."/>
            <person name="Durbin R.M."/>
            <person name="Hubbard T."/>
            <person name="Wooster R."/>
            <person name="Dunham I."/>
            <person name="Carter N.P."/>
            <person name="McVean G."/>
            <person name="Ross M.T."/>
            <person name="Harrow J."/>
            <person name="Olson M.V."/>
            <person name="Beck S."/>
            <person name="Rogers J."/>
            <person name="Bentley D.R."/>
        </authorList>
    </citation>
    <scope>NUCLEOTIDE SEQUENCE [LARGE SCALE GENOMIC DNA]</scope>
</reference>
<reference key="3">
    <citation type="submission" date="2005-07" db="EMBL/GenBank/DDBJ databases">
        <authorList>
            <person name="Mural R.J."/>
            <person name="Istrail S."/>
            <person name="Sutton G.G."/>
            <person name="Florea L."/>
            <person name="Halpern A.L."/>
            <person name="Mobarry C.M."/>
            <person name="Lippert R."/>
            <person name="Walenz B."/>
            <person name="Shatkay H."/>
            <person name="Dew I."/>
            <person name="Miller J.R."/>
            <person name="Flanigan M.J."/>
            <person name="Edwards N.J."/>
            <person name="Bolanos R."/>
            <person name="Fasulo D."/>
            <person name="Halldorsson B.V."/>
            <person name="Hannenhalli S."/>
            <person name="Turner R."/>
            <person name="Yooseph S."/>
            <person name="Lu F."/>
            <person name="Nusskern D.R."/>
            <person name="Shue B.C."/>
            <person name="Zheng X.H."/>
            <person name="Zhong F."/>
            <person name="Delcher A.L."/>
            <person name="Huson D.H."/>
            <person name="Kravitz S.A."/>
            <person name="Mouchard L."/>
            <person name="Reinert K."/>
            <person name="Remington K.A."/>
            <person name="Clark A.G."/>
            <person name="Waterman M.S."/>
            <person name="Eichler E.E."/>
            <person name="Adams M.D."/>
            <person name="Hunkapiller M.W."/>
            <person name="Myers E.W."/>
            <person name="Venter J.C."/>
        </authorList>
    </citation>
    <scope>NUCLEOTIDE SEQUENCE [LARGE SCALE GENOMIC DNA]</scope>
</reference>
<reference key="4">
    <citation type="journal article" date="2004" name="Genome Res.">
        <title>The status, quality, and expansion of the NIH full-length cDNA project: the Mammalian Gene Collection (MGC).</title>
        <authorList>
            <consortium name="The MGC Project Team"/>
        </authorList>
    </citation>
    <scope>NUCLEOTIDE SEQUENCE [LARGE SCALE MRNA]</scope>
    <source>
        <tissue>Prostate</tissue>
    </source>
</reference>
<reference key="5">
    <citation type="journal article" date="2006" name="Science">
        <title>The consensus coding sequences of human breast and colorectal cancers.</title>
        <authorList>
            <person name="Sjoeblom T."/>
            <person name="Jones S."/>
            <person name="Wood L.D."/>
            <person name="Parsons D.W."/>
            <person name="Lin J."/>
            <person name="Barber T.D."/>
            <person name="Mandelker D."/>
            <person name="Leary R.J."/>
            <person name="Ptak J."/>
            <person name="Silliman N."/>
            <person name="Szabo S."/>
            <person name="Buckhaults P."/>
            <person name="Farrell C."/>
            <person name="Meeh P."/>
            <person name="Markowitz S.D."/>
            <person name="Willis J."/>
            <person name="Dawson D."/>
            <person name="Willson J.K.V."/>
            <person name="Gazdar A.F."/>
            <person name="Hartigan J."/>
            <person name="Wu L."/>
            <person name="Liu C."/>
            <person name="Parmigiani G."/>
            <person name="Park B.H."/>
            <person name="Bachman K.E."/>
            <person name="Papadopoulos N."/>
            <person name="Vogelstein B."/>
            <person name="Kinzler K.W."/>
            <person name="Velculescu V.E."/>
        </authorList>
    </citation>
    <scope>VARIANTS [LARGE SCALE ANALYSIS] TRP-52 AND TRP-100</scope>
</reference>
<reference key="6">
    <citation type="journal article" date="2012" name="Am. J. Pathol.">
        <title>Role of ERRF, a novel ER-related nuclear factor, in the growth control of ER-positive human breast cancer cells.</title>
        <authorList>
            <person name="Su D."/>
            <person name="Fu X."/>
            <person name="Fan S."/>
            <person name="Wu X."/>
            <person name="Wang X.X."/>
            <person name="Fu L."/>
            <person name="Dong X.Y."/>
            <person name="Ni J.J."/>
            <person name="Fu L."/>
            <person name="Zhu Z."/>
            <person name="Dong J.T."/>
        </authorList>
    </citation>
    <scope>TISSUE SPECIFICITY</scope>
    <scope>INDUCTION</scope>
</reference>
<reference key="7">
    <citation type="journal article" date="2016" name="Biochem. Biophys. Res. Commun.">
        <title>ERRF is essential for estrogen-estrogen receptor alpha signaling pathway in ER positive breast cancer cells.</title>
        <authorList>
            <person name="Luo A."/>
            <person name="Zhang X."/>
        </authorList>
    </citation>
    <scope>FUNCTION</scope>
</reference>
<reference key="8">
    <citation type="journal article" date="2017" name="Oncotarget">
        <title>C1orf64 is a novel androgen receptor target gene and coregulator that interacts with 14-3-3 protein in breast cancer.</title>
        <authorList>
            <person name="Naderi A."/>
        </authorList>
    </citation>
    <scope>TISSUE SPECIFICITY</scope>
    <scope>INTERACTION WITH 14-3-3 PROTEINS</scope>
    <scope>FUNCTION</scope>
</reference>
<gene>
    <name evidence="6" type="primary">SRARP</name>
    <name type="synonym">C1orf64</name>
    <name evidence="4" type="synonym">ERRF</name>
    <name evidence="5" type="synonym">SSPR</name>
</gene>
<accession>Q8NEQ6</accession>
<accession>B3KXI9</accession>
<feature type="chain" id="PRO_0000247124" description="Steroid receptor-associated and regulated protein">
    <location>
        <begin position="1"/>
        <end position="169"/>
    </location>
</feature>
<feature type="sequence variant" id="VAR_035491" description="In a breast cancer sample; somatic mutation." evidence="1">
    <original>G</original>
    <variation>W</variation>
    <location>
        <position position="52"/>
    </location>
</feature>
<feature type="sequence variant" id="VAR_035492" description="In a breast cancer sample; somatic mutation." evidence="1">
    <original>G</original>
    <variation>W</variation>
    <location>
        <position position="100"/>
    </location>
</feature>
<feature type="sequence variant" id="VAR_033654" description="In dbSNP:rs34950166.">
    <original>L</original>
    <variation>F</variation>
    <location>
        <position position="112"/>
    </location>
</feature>